<reference key="1">
    <citation type="journal article" date="1996" name="Mol. Cell. Biol.">
        <title>Identification of the bud emergence gene BEM4 and its interactions with rho-type GTPases in Saccharomyces cerevisiae.</title>
        <authorList>
            <person name="Mack D."/>
            <person name="Nishimura K."/>
            <person name="Dennehey B.K."/>
            <person name="Arbogast T."/>
            <person name="Parkinson J."/>
            <person name="Toh-e A."/>
            <person name="Pringle J.R."/>
            <person name="Bender A."/>
            <person name="Matsui Y."/>
        </authorList>
    </citation>
    <scope>NUCLEOTIDE SEQUENCE [GENOMIC DNA]</scope>
    <scope>FUNCTION</scope>
    <scope>INTERACTION WITH CDC42; RHO1; RHO2 AND RHO4</scope>
</reference>
<reference key="2">
    <citation type="journal article" date="1996" name="Yeast">
        <title>The sequence of 55 kb on the left arm of yeast chromosome XVI identifies a small nuclear RNA, a new putative protein kinase and two new putative regulators.</title>
        <authorList>
            <person name="Purnelle B."/>
            <person name="Coster F."/>
            <person name="Goffeau A."/>
        </authorList>
    </citation>
    <scope>NUCLEOTIDE SEQUENCE [GENOMIC DNA]</scope>
    <source>
        <strain>ATCC 204511 / S288c / AB972</strain>
    </source>
</reference>
<reference key="3">
    <citation type="journal article" date="1997" name="Nature">
        <title>The nucleotide sequence of Saccharomyces cerevisiae chromosome XVI.</title>
        <authorList>
            <person name="Bussey H."/>
            <person name="Storms R.K."/>
            <person name="Ahmed A."/>
            <person name="Albermann K."/>
            <person name="Allen E."/>
            <person name="Ansorge W."/>
            <person name="Araujo R."/>
            <person name="Aparicio A."/>
            <person name="Barrell B.G."/>
            <person name="Badcock K."/>
            <person name="Benes V."/>
            <person name="Botstein D."/>
            <person name="Bowman S."/>
            <person name="Brueckner M."/>
            <person name="Carpenter J."/>
            <person name="Cherry J.M."/>
            <person name="Chung E."/>
            <person name="Churcher C.M."/>
            <person name="Coster F."/>
            <person name="Davis K."/>
            <person name="Davis R.W."/>
            <person name="Dietrich F.S."/>
            <person name="Delius H."/>
            <person name="DiPaolo T."/>
            <person name="Dubois E."/>
            <person name="Duesterhoeft A."/>
            <person name="Duncan M."/>
            <person name="Floeth M."/>
            <person name="Fortin N."/>
            <person name="Friesen J.D."/>
            <person name="Fritz C."/>
            <person name="Goffeau A."/>
            <person name="Hall J."/>
            <person name="Hebling U."/>
            <person name="Heumann K."/>
            <person name="Hilbert H."/>
            <person name="Hillier L.W."/>
            <person name="Hunicke-Smith S."/>
            <person name="Hyman R.W."/>
            <person name="Johnston M."/>
            <person name="Kalman S."/>
            <person name="Kleine K."/>
            <person name="Komp C."/>
            <person name="Kurdi O."/>
            <person name="Lashkari D."/>
            <person name="Lew H."/>
            <person name="Lin A."/>
            <person name="Lin D."/>
            <person name="Louis E.J."/>
            <person name="Marathe R."/>
            <person name="Messenguy F."/>
            <person name="Mewes H.-W."/>
            <person name="Mirtipati S."/>
            <person name="Moestl D."/>
            <person name="Mueller-Auer S."/>
            <person name="Namath A."/>
            <person name="Nentwich U."/>
            <person name="Oefner P."/>
            <person name="Pearson D."/>
            <person name="Petel F.X."/>
            <person name="Pohl T.M."/>
            <person name="Purnelle B."/>
            <person name="Rajandream M.A."/>
            <person name="Rechmann S."/>
            <person name="Rieger M."/>
            <person name="Riles L."/>
            <person name="Roberts D."/>
            <person name="Schaefer M."/>
            <person name="Scharfe M."/>
            <person name="Scherens B."/>
            <person name="Schramm S."/>
            <person name="Schroeder M."/>
            <person name="Sdicu A.-M."/>
            <person name="Tettelin H."/>
            <person name="Urrestarazu L.A."/>
            <person name="Ushinsky S."/>
            <person name="Vierendeels F."/>
            <person name="Vissers S."/>
            <person name="Voss H."/>
            <person name="Walsh S.V."/>
            <person name="Wambutt R."/>
            <person name="Wang Y."/>
            <person name="Wedler E."/>
            <person name="Wedler H."/>
            <person name="Winnett E."/>
            <person name="Zhong W.-W."/>
            <person name="Zollner A."/>
            <person name="Vo D.H."/>
            <person name="Hani J."/>
        </authorList>
    </citation>
    <scope>NUCLEOTIDE SEQUENCE [LARGE SCALE GENOMIC DNA]</scope>
    <source>
        <strain>ATCC 204508 / S288c</strain>
    </source>
</reference>
<reference key="4">
    <citation type="journal article" date="2014" name="G3 (Bethesda)">
        <title>The reference genome sequence of Saccharomyces cerevisiae: Then and now.</title>
        <authorList>
            <person name="Engel S.R."/>
            <person name="Dietrich F.S."/>
            <person name="Fisk D.G."/>
            <person name="Binkley G."/>
            <person name="Balakrishnan R."/>
            <person name="Costanzo M.C."/>
            <person name="Dwight S.S."/>
            <person name="Hitz B.C."/>
            <person name="Karra K."/>
            <person name="Nash R.S."/>
            <person name="Weng S."/>
            <person name="Wong E.D."/>
            <person name="Lloyd P."/>
            <person name="Skrzypek M.S."/>
            <person name="Miyasato S.R."/>
            <person name="Simison M."/>
            <person name="Cherry J.M."/>
        </authorList>
    </citation>
    <scope>GENOME REANNOTATION</scope>
    <source>
        <strain>ATCC 204508 / S288c</strain>
    </source>
</reference>
<reference key="5">
    <citation type="journal article" date="1996" name="Mol. Cell. Biol.">
        <title>ROM7/BEM4 encodes a novel protein that interacts with the Rho1p small GTP-binding protein in Saccharomyces cerevisiae.</title>
        <authorList>
            <person name="Hirano H."/>
            <person name="Tanaka K."/>
            <person name="Ozaki K."/>
            <person name="Imamura H."/>
            <person name="Kohno H."/>
            <person name="Hihara T."/>
            <person name="Kameyama T."/>
            <person name="Hotta K."/>
            <person name="Arisawa M."/>
            <person name="Watanabe T."/>
            <person name="Qadota H."/>
            <person name="Ohya Y."/>
            <person name="Takai Y."/>
        </authorList>
    </citation>
    <scope>FUNCTION</scope>
    <scope>INTERACTION WITH RHO1</scope>
    <scope>DISRUPTION PHENOTYPE</scope>
</reference>
<reference key="6">
    <citation type="journal article" date="2003" name="Nature">
        <title>Global analysis of protein localization in budding yeast.</title>
        <authorList>
            <person name="Huh W.-K."/>
            <person name="Falvo J.V."/>
            <person name="Gerke L.C."/>
            <person name="Carroll A.S."/>
            <person name="Howson R.W."/>
            <person name="Weissman J.S."/>
            <person name="O'Shea E.K."/>
        </authorList>
    </citation>
    <scope>SUBCELLULAR LOCATION [LARGE SCALE ANALYSIS]</scope>
</reference>
<reference key="7">
    <citation type="journal article" date="2003" name="Mol. Cell. Biol.">
        <title>Molecular dissection of a yeast septin: distinct domains are required for septin interaction, localization, and function.</title>
        <authorList>
            <person name="Casamayor A."/>
            <person name="Snyder M."/>
        </authorList>
    </citation>
    <scope>INTERACTION WITH CDC11</scope>
</reference>
<reference key="8">
    <citation type="journal article" date="2003" name="Nature">
        <title>Global analysis of protein expression in yeast.</title>
        <authorList>
            <person name="Ghaemmaghami S."/>
            <person name="Huh W.-K."/>
            <person name="Bower K."/>
            <person name="Howson R.W."/>
            <person name="Belle A."/>
            <person name="Dephoure N."/>
            <person name="O'Shea E.K."/>
            <person name="Weissman J.S."/>
        </authorList>
    </citation>
    <scope>LEVEL OF PROTEIN EXPRESSION [LARGE SCALE ANALYSIS]</scope>
</reference>
<dbReference type="EMBL" id="L27816">
    <property type="protein sequence ID" value="AAB47774.1"/>
    <property type="molecule type" value="Genomic_DNA"/>
</dbReference>
<dbReference type="EMBL" id="X96770">
    <property type="protein sequence ID" value="CAA65560.1"/>
    <property type="molecule type" value="Genomic_DNA"/>
</dbReference>
<dbReference type="EMBL" id="Z73517">
    <property type="protein sequence ID" value="CAA97866.1"/>
    <property type="molecule type" value="Genomic_DNA"/>
</dbReference>
<dbReference type="EMBL" id="BK006949">
    <property type="protein sequence ID" value="DAA11273.1"/>
    <property type="molecule type" value="Genomic_DNA"/>
</dbReference>
<dbReference type="PIR" id="S45177">
    <property type="entry name" value="S45177"/>
</dbReference>
<dbReference type="RefSeq" id="NP_015164.1">
    <property type="nucleotide sequence ID" value="NM_001183975.1"/>
</dbReference>
<dbReference type="BioGRID" id="36022">
    <property type="interactions" value="408"/>
</dbReference>
<dbReference type="DIP" id="DIP-1208N"/>
<dbReference type="FunCoup" id="P39011">
    <property type="interactions" value="86"/>
</dbReference>
<dbReference type="IntAct" id="P39011">
    <property type="interactions" value="25"/>
</dbReference>
<dbReference type="MINT" id="P39011"/>
<dbReference type="STRING" id="4932.YPL161C"/>
<dbReference type="iPTMnet" id="P39011"/>
<dbReference type="PaxDb" id="4932-YPL161C"/>
<dbReference type="PeptideAtlas" id="P39011"/>
<dbReference type="EnsemblFungi" id="YPL161C_mRNA">
    <property type="protein sequence ID" value="YPL161C"/>
    <property type="gene ID" value="YPL161C"/>
</dbReference>
<dbReference type="GeneID" id="855942"/>
<dbReference type="KEGG" id="sce:YPL161C"/>
<dbReference type="AGR" id="SGD:S000006082"/>
<dbReference type="SGD" id="S000006082">
    <property type="gene designation" value="BEM4"/>
</dbReference>
<dbReference type="VEuPathDB" id="FungiDB:YPL161C"/>
<dbReference type="eggNOG" id="ENOG502QQB4">
    <property type="taxonomic scope" value="Eukaryota"/>
</dbReference>
<dbReference type="HOGENOM" id="CLU_436179_0_0_1"/>
<dbReference type="InParanoid" id="P39011"/>
<dbReference type="OMA" id="ESCFNNG"/>
<dbReference type="OrthoDB" id="4059796at2759"/>
<dbReference type="BioCyc" id="YEAST:G3O-34057-MONOMER"/>
<dbReference type="BioGRID-ORCS" id="855942">
    <property type="hits" value="0 hits in 10 CRISPR screens"/>
</dbReference>
<dbReference type="PRO" id="PR:P39011"/>
<dbReference type="Proteomes" id="UP000002311">
    <property type="component" value="Chromosome XVI"/>
</dbReference>
<dbReference type="RNAct" id="P39011">
    <property type="molecule type" value="protein"/>
</dbReference>
<dbReference type="GO" id="GO:0005737">
    <property type="term" value="C:cytoplasm"/>
    <property type="evidence" value="ECO:0007005"/>
    <property type="project" value="SGD"/>
</dbReference>
<dbReference type="GO" id="GO:0005829">
    <property type="term" value="C:cytosol"/>
    <property type="evidence" value="ECO:0000318"/>
    <property type="project" value="GO_Central"/>
</dbReference>
<dbReference type="GO" id="GO:0005634">
    <property type="term" value="C:nucleus"/>
    <property type="evidence" value="ECO:0007005"/>
    <property type="project" value="SGD"/>
</dbReference>
<dbReference type="GO" id="GO:0005085">
    <property type="term" value="F:guanyl-nucleotide exchange factor activity"/>
    <property type="evidence" value="ECO:0000250"/>
    <property type="project" value="UniProtKB"/>
</dbReference>
<dbReference type="GO" id="GO:0030010">
    <property type="term" value="P:establishment of cell polarity"/>
    <property type="evidence" value="ECO:0000315"/>
    <property type="project" value="SGD"/>
</dbReference>
<dbReference type="GO" id="GO:1903338">
    <property type="term" value="P:regulation of cell wall organization or biogenesis"/>
    <property type="evidence" value="ECO:0000315"/>
    <property type="project" value="UniProtKB"/>
</dbReference>
<dbReference type="GO" id="GO:0019236">
    <property type="term" value="P:response to pheromone"/>
    <property type="evidence" value="ECO:0007669"/>
    <property type="project" value="UniProtKB-KW"/>
</dbReference>
<dbReference type="GO" id="GO:0007266">
    <property type="term" value="P:Rho protein signal transduction"/>
    <property type="evidence" value="ECO:0000315"/>
    <property type="project" value="SGD"/>
</dbReference>
<dbReference type="InterPro" id="IPR040144">
    <property type="entry name" value="RAP1GDS1"/>
</dbReference>
<dbReference type="PANTHER" id="PTHR10957">
    <property type="entry name" value="RAP1 GTPASE-GDP DISSOCIATION STIMULATOR 1"/>
    <property type="match status" value="1"/>
</dbReference>
<accession>P39011</accession>
<accession>D6W3K7</accession>
<proteinExistence type="evidence at protein level"/>
<sequence length="633" mass="70993">MDYEEILFGLQPILNASSIKDVPMNDVYLGSYLAVMDQLAVSLREPSNRDIVGKTGLLLNLVRVLEQALDICFHDTSISINDKIAFYEISSEVIRCIANAIIDNDDNREILLDSGGKKLLNYYIGGVLQLDEISSDKSEDSLVDKLQMRSVVLLRNFCIGNLKYTENLAPFIRGPLFVLLKTTQYSYLSSPEKVVLGSDLLNDILKVNYSNVQISDLFFLSQYIKKISSNVQNKELQAMEDGAVEAYSNTETQKFAGQGNQEYIEKEEEDDEEDVNCELLLNLSTCLETIVAKDETINFTNEEQLVLSMQKNLILSLVCLESKTFNNKLIVMRRLISCAGNISANLTNSNKREQSLCIETIKSSASSYALAAALMILCNSVASKSDAVALLKLISLSELIQVGSLLQDPLQYQGFLDLLRKLLNLENTMWLDIKDLFTLFQIMRRCHEQTKYYNNLRSLLTNLLNKTLTVLPSSKIHNSISSDPTIISFIAEHGTLTSCIAMDKLLVSKKALPKEAITSLWDSIFKFQNLGQAEQLSISDLFHITKTVGIYLKDSSVTADVNPIENILFKDYIQKLTLILETILSFKENKDKGSESCFNNGKFIAGIILNIVKNTKCLTPEEQNLEALAKSFF</sequence>
<feature type="chain" id="PRO_0000064910" description="GTPase-GDP dissociation stimulator BEM4">
    <location>
        <begin position="1"/>
        <end position="633"/>
    </location>
</feature>
<keyword id="KW-0963">Cytoplasm</keyword>
<keyword id="KW-0344">Guanine-nucleotide releasing factor</keyword>
<keyword id="KW-0539">Nucleus</keyword>
<keyword id="KW-0589">Pheromone response</keyword>
<keyword id="KW-1185">Reference proteome</keyword>
<gene>
    <name evidence="7" type="primary">BEM4</name>
    <name evidence="8" type="synonym">ROM7</name>
    <name type="ordered locus">YPL161C</name>
    <name type="ORF">P2561</name>
</gene>
<organism>
    <name type="scientific">Saccharomyces cerevisiae (strain ATCC 204508 / S288c)</name>
    <name type="common">Baker's yeast</name>
    <dbReference type="NCBI Taxonomy" id="559292"/>
    <lineage>
        <taxon>Eukaryota</taxon>
        <taxon>Fungi</taxon>
        <taxon>Dikarya</taxon>
        <taxon>Ascomycota</taxon>
        <taxon>Saccharomycotina</taxon>
        <taxon>Saccharomycetes</taxon>
        <taxon>Saccharomycetales</taxon>
        <taxon>Saccharomycetaceae</taxon>
        <taxon>Saccharomyces</taxon>
    </lineage>
</organism>
<name>GDS1_YEAST</name>
<comment type="function">
    <text evidence="1 5 6">Probably acts as a GEF (guanine nucleotide exchange factor) for the Rho family of small GTP-binding proteins (G proteins) that stimulates the dissociation of GDP to enable subsequent binding of GTP (By similarity). May also chaperone the processing and/or trafficking of small GTPases independently of GEF activity (By similarity). Involved in the control of polarized cell growth via CDC42-mediated signaling (PubMed:8754839). Involved in the control of cell-wall organization via RHO1-mediated signaling (PubMed:8754839, PubMed:8754840). May also function via RHO2 and RHO4 (PubMed:8754839).</text>
</comment>
<comment type="subunit">
    <text evidence="2 5 6">Interacts with CDC42; the interaction is direct (PubMed:8754839). Interacts with RHO1; the interaction is direct (PubMed:8754839, PubMed:8754840). Interacts with RHO2 (PubMed:8754839). Interacts with RHO4 (PubMed:8754839). Interacts with CDC11 (PubMed:12665577).</text>
</comment>
<comment type="subcellular location">
    <subcellularLocation>
        <location evidence="3">Nucleus</location>
    </subcellularLocation>
    <subcellularLocation>
        <location evidence="3">Cytoplasm</location>
    </subcellularLocation>
</comment>
<comment type="disruption phenotype">
    <text evidence="6">Cell polarity defects; delocalized actin patches and abnormal budding (PubMed:8754840). Cell lysis at high temperature (PubMed:8754840).</text>
</comment>
<comment type="miscellaneous">
    <text evidence="4">Present with 6330 molecules/cell in log phase SD medium.</text>
</comment>
<protein>
    <recommendedName>
        <fullName evidence="1">GTPase-GDP dissociation stimulator BEM4</fullName>
    </recommendedName>
    <alternativeName>
        <fullName evidence="7">Bud emergence protein 4</fullName>
    </alternativeName>
</protein>
<evidence type="ECO:0000250" key="1">
    <source>
        <dbReference type="UniProtKB" id="P52306"/>
    </source>
</evidence>
<evidence type="ECO:0000269" key="2">
    <source>
    </source>
</evidence>
<evidence type="ECO:0000269" key="3">
    <source>
    </source>
</evidence>
<evidence type="ECO:0000269" key="4">
    <source>
    </source>
</evidence>
<evidence type="ECO:0000269" key="5">
    <source>
    </source>
</evidence>
<evidence type="ECO:0000269" key="6">
    <source>
    </source>
</evidence>
<evidence type="ECO:0000303" key="7">
    <source>
    </source>
</evidence>
<evidence type="ECO:0000303" key="8">
    <source>
    </source>
</evidence>